<organism>
    <name type="scientific">Haemophilus influenzae (strain ATCC 51907 / DSM 11121 / KW20 / Rd)</name>
    <dbReference type="NCBI Taxonomy" id="71421"/>
    <lineage>
        <taxon>Bacteria</taxon>
        <taxon>Pseudomonadati</taxon>
        <taxon>Pseudomonadota</taxon>
        <taxon>Gammaproteobacteria</taxon>
        <taxon>Pasteurellales</taxon>
        <taxon>Pasteurellaceae</taxon>
        <taxon>Haemophilus</taxon>
    </lineage>
</organism>
<keyword id="KW-0067">ATP-binding</keyword>
<keyword id="KW-0963">Cytoplasm</keyword>
<keyword id="KW-0418">Kinase</keyword>
<keyword id="KW-0460">Magnesium</keyword>
<keyword id="KW-0479">Metal-binding</keyword>
<keyword id="KW-0545">Nucleotide biosynthesis</keyword>
<keyword id="KW-0547">Nucleotide-binding</keyword>
<keyword id="KW-1185">Reference proteome</keyword>
<keyword id="KW-0808">Transferase</keyword>
<proteinExistence type="inferred from homology"/>
<comment type="function">
    <text evidence="1">Involved in the biosynthesis of the central metabolite phospho-alpha-D-ribosyl-1-pyrophosphate (PRPP) via the transfer of pyrophosphoryl group from ATP to 1-hydroxyl of ribose-5-phosphate (Rib-5-P).</text>
</comment>
<comment type="catalytic activity">
    <reaction evidence="1">
        <text>D-ribose 5-phosphate + ATP = 5-phospho-alpha-D-ribose 1-diphosphate + AMP + H(+)</text>
        <dbReference type="Rhea" id="RHEA:15609"/>
        <dbReference type="ChEBI" id="CHEBI:15378"/>
        <dbReference type="ChEBI" id="CHEBI:30616"/>
        <dbReference type="ChEBI" id="CHEBI:58017"/>
        <dbReference type="ChEBI" id="CHEBI:78346"/>
        <dbReference type="ChEBI" id="CHEBI:456215"/>
        <dbReference type="EC" id="2.7.6.1"/>
    </reaction>
</comment>
<comment type="cofactor">
    <cofactor evidence="1">
        <name>Mg(2+)</name>
        <dbReference type="ChEBI" id="CHEBI:18420"/>
    </cofactor>
    <text evidence="1">Binds 2 Mg(2+) ions per subunit.</text>
</comment>
<comment type="pathway">
    <text evidence="1">Metabolic intermediate biosynthesis; 5-phospho-alpha-D-ribose 1-diphosphate biosynthesis; 5-phospho-alpha-D-ribose 1-diphosphate from D-ribose 5-phosphate (route I): step 1/1.</text>
</comment>
<comment type="subunit">
    <text evidence="1">Homohexamer.</text>
</comment>
<comment type="subcellular location">
    <subcellularLocation>
        <location evidence="1">Cytoplasm</location>
    </subcellularLocation>
</comment>
<comment type="similarity">
    <text evidence="1">Belongs to the ribose-phosphate pyrophosphokinase family. Class I subfamily.</text>
</comment>
<dbReference type="EC" id="2.7.6.1" evidence="1"/>
<dbReference type="EMBL" id="L42023">
    <property type="protein sequence ID" value="AAC23253.1"/>
    <property type="molecule type" value="Genomic_DNA"/>
</dbReference>
<dbReference type="PIR" id="C64132">
    <property type="entry name" value="C64132"/>
</dbReference>
<dbReference type="RefSeq" id="NP_439751.1">
    <property type="nucleotide sequence ID" value="NC_000907.1"/>
</dbReference>
<dbReference type="SMR" id="P44328"/>
<dbReference type="STRING" id="71421.HI_1609"/>
<dbReference type="EnsemblBacteria" id="AAC23253">
    <property type="protein sequence ID" value="AAC23253"/>
    <property type="gene ID" value="HI_1609"/>
</dbReference>
<dbReference type="KEGG" id="hin:HI_1609"/>
<dbReference type="PATRIC" id="fig|71421.8.peg.1682"/>
<dbReference type="eggNOG" id="COG0462">
    <property type="taxonomic scope" value="Bacteria"/>
</dbReference>
<dbReference type="HOGENOM" id="CLU_033546_2_0_6"/>
<dbReference type="OrthoDB" id="9777067at2"/>
<dbReference type="PhylomeDB" id="P44328"/>
<dbReference type="BioCyc" id="HINF71421:G1GJ1-1622-MONOMER"/>
<dbReference type="UniPathway" id="UPA00087">
    <property type="reaction ID" value="UER00172"/>
</dbReference>
<dbReference type="Proteomes" id="UP000000579">
    <property type="component" value="Chromosome"/>
</dbReference>
<dbReference type="GO" id="GO:0005737">
    <property type="term" value="C:cytoplasm"/>
    <property type="evidence" value="ECO:0000318"/>
    <property type="project" value="GO_Central"/>
</dbReference>
<dbReference type="GO" id="GO:0002189">
    <property type="term" value="C:ribose phosphate diphosphokinase complex"/>
    <property type="evidence" value="ECO:0000318"/>
    <property type="project" value="GO_Central"/>
</dbReference>
<dbReference type="GO" id="GO:0005524">
    <property type="term" value="F:ATP binding"/>
    <property type="evidence" value="ECO:0007669"/>
    <property type="project" value="UniProtKB-KW"/>
</dbReference>
<dbReference type="GO" id="GO:0016301">
    <property type="term" value="F:kinase activity"/>
    <property type="evidence" value="ECO:0007669"/>
    <property type="project" value="UniProtKB-KW"/>
</dbReference>
<dbReference type="GO" id="GO:0000287">
    <property type="term" value="F:magnesium ion binding"/>
    <property type="evidence" value="ECO:0007669"/>
    <property type="project" value="UniProtKB-UniRule"/>
</dbReference>
<dbReference type="GO" id="GO:0004749">
    <property type="term" value="F:ribose phosphate diphosphokinase activity"/>
    <property type="evidence" value="ECO:0000318"/>
    <property type="project" value="GO_Central"/>
</dbReference>
<dbReference type="GO" id="GO:0006015">
    <property type="term" value="P:5-phosphoribose 1-diphosphate biosynthetic process"/>
    <property type="evidence" value="ECO:0000318"/>
    <property type="project" value="GO_Central"/>
</dbReference>
<dbReference type="GO" id="GO:0006164">
    <property type="term" value="P:purine nucleotide biosynthetic process"/>
    <property type="evidence" value="ECO:0000318"/>
    <property type="project" value="GO_Central"/>
</dbReference>
<dbReference type="GO" id="GO:0009156">
    <property type="term" value="P:ribonucleoside monophosphate biosynthetic process"/>
    <property type="evidence" value="ECO:0007669"/>
    <property type="project" value="InterPro"/>
</dbReference>
<dbReference type="CDD" id="cd06223">
    <property type="entry name" value="PRTases_typeI"/>
    <property type="match status" value="1"/>
</dbReference>
<dbReference type="FunFam" id="3.40.50.2020:FF:000001">
    <property type="entry name" value="Ribose-phosphate pyrophosphokinase"/>
    <property type="match status" value="1"/>
</dbReference>
<dbReference type="Gene3D" id="3.40.50.2020">
    <property type="match status" value="2"/>
</dbReference>
<dbReference type="HAMAP" id="MF_00583_B">
    <property type="entry name" value="RibP_PPkinase_B"/>
    <property type="match status" value="1"/>
</dbReference>
<dbReference type="InterPro" id="IPR000842">
    <property type="entry name" value="PRib_PP_synth_CS"/>
</dbReference>
<dbReference type="InterPro" id="IPR029099">
    <property type="entry name" value="Pribosyltran_N"/>
</dbReference>
<dbReference type="InterPro" id="IPR000836">
    <property type="entry name" value="PRibTrfase_dom"/>
</dbReference>
<dbReference type="InterPro" id="IPR029057">
    <property type="entry name" value="PRTase-like"/>
</dbReference>
<dbReference type="InterPro" id="IPR005946">
    <property type="entry name" value="Rib-P_diPkinase"/>
</dbReference>
<dbReference type="InterPro" id="IPR037515">
    <property type="entry name" value="Rib-P_diPkinase_bac"/>
</dbReference>
<dbReference type="NCBIfam" id="NF002320">
    <property type="entry name" value="PRK01259.1"/>
    <property type="match status" value="1"/>
</dbReference>
<dbReference type="NCBIfam" id="TIGR01251">
    <property type="entry name" value="ribP_PPkin"/>
    <property type="match status" value="1"/>
</dbReference>
<dbReference type="PANTHER" id="PTHR10210">
    <property type="entry name" value="RIBOSE-PHOSPHATE DIPHOSPHOKINASE FAMILY MEMBER"/>
    <property type="match status" value="1"/>
</dbReference>
<dbReference type="PANTHER" id="PTHR10210:SF41">
    <property type="entry name" value="RIBOSE-PHOSPHATE PYROPHOSPHOKINASE 1, CHLOROPLASTIC"/>
    <property type="match status" value="1"/>
</dbReference>
<dbReference type="Pfam" id="PF14572">
    <property type="entry name" value="Pribosyl_synth"/>
    <property type="match status" value="1"/>
</dbReference>
<dbReference type="Pfam" id="PF13793">
    <property type="entry name" value="Pribosyltran_N"/>
    <property type="match status" value="1"/>
</dbReference>
<dbReference type="SMART" id="SM01400">
    <property type="entry name" value="Pribosyltran_N"/>
    <property type="match status" value="1"/>
</dbReference>
<dbReference type="SUPFAM" id="SSF53271">
    <property type="entry name" value="PRTase-like"/>
    <property type="match status" value="1"/>
</dbReference>
<dbReference type="PROSITE" id="PS00114">
    <property type="entry name" value="PRPP_SYNTHASE"/>
    <property type="match status" value="1"/>
</dbReference>
<accession>P44328</accession>
<evidence type="ECO:0000255" key="1">
    <source>
        <dbReference type="HAMAP-Rule" id="MF_00583"/>
    </source>
</evidence>
<sequence length="315" mass="34170">MPDIKLFAGNATPELAKRISERLYISLGDATVARFSDGEIQVQINENVRGADVFIIQSTCAPTNDNLMELVVMVDALRRASAGRITAVIPYFGYARQDRRVRSARVPITAKVVADLLSIVGIDRVLTCDLHAEQIQGFFDVPVDNVFGSPVLIHDILKKSDLKNPIVVSPDIGGVVRARAVAKLLNDTDMAIIDKRRPRANVAQVMHIIGDVADRDCILVDDMIDTGGTLCKAAEALKERGAKRVFAYATHAVFSGAAAKNLASDAIDEVVVTDTIPLSEEMKAIGKVRVLTLSSMLAEAIRRISNEESISAMFN</sequence>
<feature type="chain" id="PRO_0000141142" description="Ribose-phosphate pyrophosphokinase">
    <location>
        <begin position="1"/>
        <end position="315"/>
    </location>
</feature>
<feature type="active site" evidence="1">
    <location>
        <position position="195"/>
    </location>
</feature>
<feature type="binding site" evidence="1">
    <location>
        <begin position="37"/>
        <end position="39"/>
    </location>
    <ligand>
        <name>ATP</name>
        <dbReference type="ChEBI" id="CHEBI:30616"/>
    </ligand>
</feature>
<feature type="binding site" evidence="1">
    <location>
        <begin position="96"/>
        <end position="97"/>
    </location>
    <ligand>
        <name>ATP</name>
        <dbReference type="ChEBI" id="CHEBI:30616"/>
    </ligand>
</feature>
<feature type="binding site" evidence="1">
    <location>
        <position position="131"/>
    </location>
    <ligand>
        <name>Mg(2+)</name>
        <dbReference type="ChEBI" id="CHEBI:18420"/>
        <label>1</label>
    </ligand>
</feature>
<feature type="binding site" evidence="1">
    <location>
        <position position="171"/>
    </location>
    <ligand>
        <name>Mg(2+)</name>
        <dbReference type="ChEBI" id="CHEBI:18420"/>
        <label>2</label>
    </ligand>
</feature>
<feature type="binding site" evidence="1">
    <location>
        <position position="197"/>
    </location>
    <ligand>
        <name>D-ribose 5-phosphate</name>
        <dbReference type="ChEBI" id="CHEBI:78346"/>
    </ligand>
</feature>
<feature type="binding site" evidence="1">
    <location>
        <position position="221"/>
    </location>
    <ligand>
        <name>D-ribose 5-phosphate</name>
        <dbReference type="ChEBI" id="CHEBI:78346"/>
    </ligand>
</feature>
<feature type="binding site" evidence="1">
    <location>
        <begin position="225"/>
        <end position="229"/>
    </location>
    <ligand>
        <name>D-ribose 5-phosphate</name>
        <dbReference type="ChEBI" id="CHEBI:78346"/>
    </ligand>
</feature>
<gene>
    <name evidence="1" type="primary">prs</name>
    <name type="synonym">prsA</name>
    <name type="ordered locus">HI_1609</name>
</gene>
<protein>
    <recommendedName>
        <fullName evidence="1">Ribose-phosphate pyrophosphokinase</fullName>
        <shortName evidence="1">RPPK</shortName>
        <ecNumber evidence="1">2.7.6.1</ecNumber>
    </recommendedName>
    <alternativeName>
        <fullName evidence="1">5-phospho-D-ribosyl alpha-1-diphosphate synthase</fullName>
    </alternativeName>
    <alternativeName>
        <fullName evidence="1">Phosphoribosyl diphosphate synthase</fullName>
    </alternativeName>
    <alternativeName>
        <fullName evidence="1">Phosphoribosyl pyrophosphate synthase</fullName>
        <shortName evidence="1">P-Rib-PP synthase</shortName>
        <shortName evidence="1">PRPP synthase</shortName>
        <shortName evidence="1">PRPPase</shortName>
    </alternativeName>
</protein>
<name>KPRS_HAEIN</name>
<reference key="1">
    <citation type="journal article" date="1995" name="Science">
        <title>Whole-genome random sequencing and assembly of Haemophilus influenzae Rd.</title>
        <authorList>
            <person name="Fleischmann R.D."/>
            <person name="Adams M.D."/>
            <person name="White O."/>
            <person name="Clayton R.A."/>
            <person name="Kirkness E.F."/>
            <person name="Kerlavage A.R."/>
            <person name="Bult C.J."/>
            <person name="Tomb J.-F."/>
            <person name="Dougherty B.A."/>
            <person name="Merrick J.M."/>
            <person name="McKenney K."/>
            <person name="Sutton G.G."/>
            <person name="FitzHugh W."/>
            <person name="Fields C.A."/>
            <person name="Gocayne J.D."/>
            <person name="Scott J.D."/>
            <person name="Shirley R."/>
            <person name="Liu L.-I."/>
            <person name="Glodek A."/>
            <person name="Kelley J.M."/>
            <person name="Weidman J.F."/>
            <person name="Phillips C.A."/>
            <person name="Spriggs T."/>
            <person name="Hedblom E."/>
            <person name="Cotton M.D."/>
            <person name="Utterback T.R."/>
            <person name="Hanna M.C."/>
            <person name="Nguyen D.T."/>
            <person name="Saudek D.M."/>
            <person name="Brandon R.C."/>
            <person name="Fine L.D."/>
            <person name="Fritchman J.L."/>
            <person name="Fuhrmann J.L."/>
            <person name="Geoghagen N.S.M."/>
            <person name="Gnehm C.L."/>
            <person name="McDonald L.A."/>
            <person name="Small K.V."/>
            <person name="Fraser C.M."/>
            <person name="Smith H.O."/>
            <person name="Venter J.C."/>
        </authorList>
    </citation>
    <scope>NUCLEOTIDE SEQUENCE [LARGE SCALE GENOMIC DNA]</scope>
    <source>
        <strain>ATCC 51907 / DSM 11121 / KW20 / Rd</strain>
    </source>
</reference>